<dbReference type="EMBL" id="AK005534">
    <property type="protein sequence ID" value="BAB24105.1"/>
    <property type="status" value="ALT_FRAME"/>
    <property type="molecule type" value="mRNA"/>
</dbReference>
<dbReference type="EMBL" id="AK160246">
    <property type="protein sequence ID" value="BAE35711.1"/>
    <property type="molecule type" value="mRNA"/>
</dbReference>
<dbReference type="EMBL" id="BC027827">
    <property type="protein sequence ID" value="AAH27827.1"/>
    <property type="status" value="ALT_INIT"/>
    <property type="molecule type" value="mRNA"/>
</dbReference>
<dbReference type="EMBL" id="BC037642">
    <property type="protein sequence ID" value="AAH37642.1"/>
    <property type="molecule type" value="mRNA"/>
</dbReference>
<dbReference type="CCDS" id="CCDS26185.1"/>
<dbReference type="RefSeq" id="NP_001311409.1">
    <property type="nucleotide sequence ID" value="NM_001324480.1"/>
</dbReference>
<dbReference type="RefSeq" id="NP_001311410.1">
    <property type="nucleotide sequence ID" value="NM_001324481.1"/>
</dbReference>
<dbReference type="RefSeq" id="NP_001311411.1">
    <property type="nucleotide sequence ID" value="NM_001324482.1"/>
</dbReference>
<dbReference type="RefSeq" id="NP_081680.1">
    <property type="nucleotide sequence ID" value="NM_027404.2"/>
</dbReference>
<dbReference type="RefSeq" id="XP_006516280.1">
    <property type="nucleotide sequence ID" value="XM_006516217.5"/>
</dbReference>
<dbReference type="PDB" id="1UGO">
    <property type="method" value="NMR"/>
    <property type="chains" value="A=1-86"/>
</dbReference>
<dbReference type="PDBsum" id="1UGO"/>
<dbReference type="SMR" id="Q8CI32"/>
<dbReference type="BioGRID" id="214005">
    <property type="interactions" value="10"/>
</dbReference>
<dbReference type="FunCoup" id="Q8CI32">
    <property type="interactions" value="3415"/>
</dbReference>
<dbReference type="IntAct" id="Q8CI32">
    <property type="interactions" value="5"/>
</dbReference>
<dbReference type="MINT" id="Q8CI32"/>
<dbReference type="STRING" id="10090.ENSMUSP00000051049"/>
<dbReference type="iPTMnet" id="Q8CI32"/>
<dbReference type="PhosphoSitePlus" id="Q8CI32"/>
<dbReference type="SwissPalm" id="Q8CI32"/>
<dbReference type="jPOST" id="Q8CI32"/>
<dbReference type="PaxDb" id="10090-ENSMUSP00000051049"/>
<dbReference type="PeptideAtlas" id="Q8CI32"/>
<dbReference type="ProteomicsDB" id="277105"/>
<dbReference type="Pumba" id="Q8CI32"/>
<dbReference type="Antibodypedia" id="36">
    <property type="antibodies" value="552 antibodies from 35 providers"/>
</dbReference>
<dbReference type="DNASU" id="70369"/>
<dbReference type="Ensembl" id="ENSMUST00000054636.7">
    <property type="protein sequence ID" value="ENSMUSP00000051049.7"/>
    <property type="gene ID" value="ENSMUSG00000049792.7"/>
</dbReference>
<dbReference type="Ensembl" id="ENSMUST00000160576.2">
    <property type="protein sequence ID" value="ENSMUSP00000125183.2"/>
    <property type="gene ID" value="ENSMUSG00000049792.7"/>
</dbReference>
<dbReference type="GeneID" id="70369"/>
<dbReference type="KEGG" id="mmu:70369"/>
<dbReference type="UCSC" id="uc007pdr.3">
    <property type="organism name" value="mouse"/>
</dbReference>
<dbReference type="AGR" id="MGI:1917619"/>
<dbReference type="CTD" id="9529"/>
<dbReference type="MGI" id="MGI:1917619">
    <property type="gene designation" value="Bag5"/>
</dbReference>
<dbReference type="VEuPathDB" id="HostDB:ENSMUSG00000049792"/>
<dbReference type="eggNOG" id="KOG4361">
    <property type="taxonomic scope" value="Eukaryota"/>
</dbReference>
<dbReference type="GeneTree" id="ENSGT00940000158888"/>
<dbReference type="HOGENOM" id="CLU_579940_0_0_1"/>
<dbReference type="InParanoid" id="Q8CI32"/>
<dbReference type="OMA" id="MGNQHPA"/>
<dbReference type="OrthoDB" id="417450at2759"/>
<dbReference type="PhylomeDB" id="Q8CI32"/>
<dbReference type="TreeFam" id="TF102014"/>
<dbReference type="Reactome" id="R-MMU-3371453">
    <property type="pathway name" value="Regulation of HSF1-mediated heat shock response"/>
</dbReference>
<dbReference type="BioGRID-ORCS" id="70369">
    <property type="hits" value="2 hits in 78 CRISPR screens"/>
</dbReference>
<dbReference type="CD-CODE" id="CE726F99">
    <property type="entry name" value="Postsynaptic density"/>
</dbReference>
<dbReference type="ChiTaRS" id="Bag5">
    <property type="organism name" value="mouse"/>
</dbReference>
<dbReference type="EvolutionaryTrace" id="Q8CI32"/>
<dbReference type="PRO" id="PR:Q8CI32"/>
<dbReference type="Proteomes" id="UP000000589">
    <property type="component" value="Chromosome 12"/>
</dbReference>
<dbReference type="RNAct" id="Q8CI32">
    <property type="molecule type" value="protein"/>
</dbReference>
<dbReference type="Bgee" id="ENSMUSG00000049792">
    <property type="expression patterns" value="Expressed in seminiferous tubule of testis and 244 other cell types or tissues"/>
</dbReference>
<dbReference type="ExpressionAtlas" id="Q8CI32">
    <property type="expression patterns" value="baseline and differential"/>
</dbReference>
<dbReference type="GO" id="GO:0005829">
    <property type="term" value="C:cytosol"/>
    <property type="evidence" value="ECO:0000250"/>
    <property type="project" value="ParkinsonsUK-UCL"/>
</dbReference>
<dbReference type="GO" id="GO:0016234">
    <property type="term" value="C:inclusion body"/>
    <property type="evidence" value="ECO:0000250"/>
    <property type="project" value="BHF-UCL"/>
</dbReference>
<dbReference type="GO" id="GO:0030314">
    <property type="term" value="C:junctional membrane complex"/>
    <property type="evidence" value="ECO:0000314"/>
    <property type="project" value="UniProtKB"/>
</dbReference>
<dbReference type="GO" id="GO:0005739">
    <property type="term" value="C:mitochondrion"/>
    <property type="evidence" value="ECO:0000250"/>
    <property type="project" value="ParkinsonsUK-UCL"/>
</dbReference>
<dbReference type="GO" id="GO:0005634">
    <property type="term" value="C:nucleus"/>
    <property type="evidence" value="ECO:0000250"/>
    <property type="project" value="ParkinsonsUK-UCL"/>
</dbReference>
<dbReference type="GO" id="GO:0048471">
    <property type="term" value="C:perinuclear region of cytoplasm"/>
    <property type="evidence" value="ECO:0000250"/>
    <property type="project" value="BHF-UCL"/>
</dbReference>
<dbReference type="GO" id="GO:0019901">
    <property type="term" value="F:protein kinase binding"/>
    <property type="evidence" value="ECO:0007669"/>
    <property type="project" value="Ensembl"/>
</dbReference>
<dbReference type="GO" id="GO:0051087">
    <property type="term" value="F:protein-folding chaperone binding"/>
    <property type="evidence" value="ECO:0000250"/>
    <property type="project" value="BHF-UCL"/>
</dbReference>
<dbReference type="GO" id="GO:1990948">
    <property type="term" value="F:ubiquitin ligase inhibitor activity"/>
    <property type="evidence" value="ECO:0000250"/>
    <property type="project" value="BHF-UCL"/>
</dbReference>
<dbReference type="GO" id="GO:0031625">
    <property type="term" value="F:ubiquitin protein ligase binding"/>
    <property type="evidence" value="ECO:0007669"/>
    <property type="project" value="Ensembl"/>
</dbReference>
<dbReference type="GO" id="GO:0007030">
    <property type="term" value="P:Golgi organization"/>
    <property type="evidence" value="ECO:0000250"/>
    <property type="project" value="ParkinsonsUK-UCL"/>
</dbReference>
<dbReference type="GO" id="GO:0010977">
    <property type="term" value="P:negative regulation of neuron projection development"/>
    <property type="evidence" value="ECO:0000250"/>
    <property type="project" value="ParkinsonsUK-UCL"/>
</dbReference>
<dbReference type="GO" id="GO:1902176">
    <property type="term" value="P:negative regulation of oxidative stress-induced intrinsic apoptotic signaling pathway"/>
    <property type="evidence" value="ECO:0000250"/>
    <property type="project" value="ParkinsonsUK-UCL"/>
</dbReference>
<dbReference type="GO" id="GO:0032435">
    <property type="term" value="P:negative regulation of proteasomal ubiquitin-dependent protein catabolic process"/>
    <property type="evidence" value="ECO:0000250"/>
    <property type="project" value="ParkinsonsUK-UCL"/>
</dbReference>
<dbReference type="GO" id="GO:0061084">
    <property type="term" value="P:negative regulation of protein refolding"/>
    <property type="evidence" value="ECO:0000250"/>
    <property type="project" value="BHF-UCL"/>
</dbReference>
<dbReference type="GO" id="GO:0031397">
    <property type="term" value="P:negative regulation of protein ubiquitination"/>
    <property type="evidence" value="ECO:0000250"/>
    <property type="project" value="ParkinsonsUK-UCL"/>
</dbReference>
<dbReference type="GO" id="GO:0050821">
    <property type="term" value="P:protein stabilization"/>
    <property type="evidence" value="ECO:0007669"/>
    <property type="project" value="Ensembl"/>
</dbReference>
<dbReference type="GO" id="GO:0090083">
    <property type="term" value="P:regulation of inclusion body assembly"/>
    <property type="evidence" value="ECO:0000250"/>
    <property type="project" value="BHF-UCL"/>
</dbReference>
<dbReference type="FunFam" id="1.20.58.120:FF:000004">
    <property type="entry name" value="BAG family molecular chaperone regulator 5"/>
    <property type="match status" value="1"/>
</dbReference>
<dbReference type="FunFam" id="1.20.58.120:FF:000008">
    <property type="entry name" value="BAG family molecular chaperone regulator 5"/>
    <property type="match status" value="1"/>
</dbReference>
<dbReference type="FunFam" id="1.20.58.120:FF:000009">
    <property type="entry name" value="BAG family molecular chaperone regulator 5"/>
    <property type="match status" value="1"/>
</dbReference>
<dbReference type="Gene3D" id="1.20.58.120">
    <property type="entry name" value="BAG domain"/>
    <property type="match status" value="5"/>
</dbReference>
<dbReference type="InterPro" id="IPR039773">
    <property type="entry name" value="BAG_chaperone_regulator"/>
</dbReference>
<dbReference type="InterPro" id="IPR036533">
    <property type="entry name" value="BAG_dom_sf"/>
</dbReference>
<dbReference type="InterPro" id="IPR003103">
    <property type="entry name" value="BAG_domain"/>
</dbReference>
<dbReference type="PANTHER" id="PTHR12329:SF2">
    <property type="entry name" value="BAG FAMILY MOLECULAR CHAPERONE REGULATOR 5"/>
    <property type="match status" value="1"/>
</dbReference>
<dbReference type="PANTHER" id="PTHR12329">
    <property type="entry name" value="BCL2-ASSOCIATED ATHANOGENE"/>
    <property type="match status" value="1"/>
</dbReference>
<dbReference type="Pfam" id="PF02179">
    <property type="entry name" value="BAG"/>
    <property type="match status" value="4"/>
</dbReference>
<dbReference type="SMART" id="SM00264">
    <property type="entry name" value="BAG"/>
    <property type="match status" value="4"/>
</dbReference>
<dbReference type="SUPFAM" id="SSF63491">
    <property type="entry name" value="BAG domain"/>
    <property type="match status" value="4"/>
</dbReference>
<dbReference type="PROSITE" id="PS51035">
    <property type="entry name" value="BAG"/>
    <property type="match status" value="4"/>
</dbReference>
<name>BAG5_MOUSE</name>
<gene>
    <name type="primary">Bag5</name>
</gene>
<accession>Q8CI32</accession>
<accession>Q3TVA8</accession>
<accession>Q8K175</accession>
<accession>Q9DAU0</accession>
<organism>
    <name type="scientific">Mus musculus</name>
    <name type="common">Mouse</name>
    <dbReference type="NCBI Taxonomy" id="10090"/>
    <lineage>
        <taxon>Eukaryota</taxon>
        <taxon>Metazoa</taxon>
        <taxon>Chordata</taxon>
        <taxon>Craniata</taxon>
        <taxon>Vertebrata</taxon>
        <taxon>Euteleostomi</taxon>
        <taxon>Mammalia</taxon>
        <taxon>Eutheria</taxon>
        <taxon>Euarchontoglires</taxon>
        <taxon>Glires</taxon>
        <taxon>Rodentia</taxon>
        <taxon>Myomorpha</taxon>
        <taxon>Muroidea</taxon>
        <taxon>Muridae</taxon>
        <taxon>Murinae</taxon>
        <taxon>Mus</taxon>
        <taxon>Mus</taxon>
    </lineage>
</organism>
<sequence>MDMGNQHPSISRLQEIQREVKAIEPQVVGFSGLSDDKNYKRLERILTKQLFEIDSVDTEGKGDIQQARKRAAQETERLLKELEQNANHPHRIEIQNIFKEAQALVKDKIVPFYSGGNCVTDEFEEGIQDIILRLTHVKTGGKVSLRKARYRTLTKICAVQEVIEDCMKKQPSLPLSEDVHPSVAKINSVMCEVNKARGTLIALLMGVDSSETCRHLSCVLSGLIADLDALDVCGRTEIRNYRREVVEDINKLLKYLDLEEEADSTHAFDLGQNHSIIKIENVLKRMREIKNELLQAQSPPELYLRAKTELQGLIGQLDEVSLEKNPCIREARRRAVIEVQILITYLDLKEALEKRKLFPCEEHPPHKAVWEILGNLSEILGEVLSFGGNRTDKNYIRLEELLTKQLLALDAVDPQGEEKCKAARKQAVKLAQNILSYLDMKSDEWEY</sequence>
<feature type="chain" id="PRO_0000088873" description="BAG family molecular chaperone regulator 5">
    <location>
        <begin position="1"/>
        <end position="447"/>
    </location>
</feature>
<feature type="domain" description="BAG 1" evidence="4">
    <location>
        <begin position="9"/>
        <end position="86"/>
    </location>
</feature>
<feature type="domain" description="BAG 2" evidence="4">
    <location>
        <begin position="95"/>
        <end position="167"/>
    </location>
</feature>
<feature type="domain" description="BAG 3" evidence="4">
    <location>
        <begin position="182"/>
        <end position="260"/>
    </location>
</feature>
<feature type="domain" description="BAG 4" evidence="4">
    <location>
        <begin position="275"/>
        <end position="350"/>
    </location>
</feature>
<feature type="domain" description="BAG 5" evidence="4">
    <location>
        <begin position="365"/>
        <end position="442"/>
    </location>
</feature>
<feature type="mutagenesis site" description="Results in lack of BAG5 at junctional membrane complexes in cardiomyocytes from homozygous mutant mice, disruption of junctional membrane complex structure, and calcium handling abnormalities. Homozygous mutant mice exhibit ventricular dilatation and arrhythmogenicity." evidence="5">
    <location>
        <begin position="197"/>
        <end position="447"/>
    </location>
</feature>
<feature type="sequence conflict" description="In Ref. 1; BAB24105." evidence="6" ref="1">
    <original>Q</original>
    <variation>H</variation>
    <location>
        <position position="6"/>
    </location>
</feature>
<feature type="sequence conflict" description="In Ref. 1; BAB24105." evidence="6" ref="1">
    <original>I</original>
    <variation>K</variation>
    <location>
        <position position="23"/>
    </location>
</feature>
<feature type="sequence conflict" description="In Ref. 1; BAB24105." evidence="6" ref="1">
    <original>D</original>
    <variation>E</variation>
    <location>
        <position position="36"/>
    </location>
</feature>
<feature type="sequence conflict" description="In Ref. 1; BAB24105." evidence="6" ref="1">
    <original>E</original>
    <variation>G</variation>
    <location>
        <position position="52"/>
    </location>
</feature>
<feature type="sequence conflict" description="In Ref. 1; BAB24105." evidence="6" ref="1">
    <original>K</original>
    <variation>E</variation>
    <location>
        <position position="142"/>
    </location>
</feature>
<feature type="sequence conflict" description="In Ref. 1; BAB24105." evidence="6" ref="1">
    <original>A</original>
    <variation>S</variation>
    <location>
        <position position="148"/>
    </location>
</feature>
<feature type="sequence conflict" description="In Ref. 2; AAH27827." evidence="6" ref="2">
    <original>I</original>
    <variation>T</variation>
    <location>
        <position position="341"/>
    </location>
</feature>
<feature type="helix" evidence="7">
    <location>
        <begin position="10"/>
        <end position="22"/>
    </location>
</feature>
<feature type="helix" evidence="7">
    <location>
        <begin position="24"/>
        <end position="28"/>
    </location>
</feature>
<feature type="helix" evidence="7">
    <location>
        <begin position="38"/>
        <end position="55"/>
    </location>
</feature>
<feature type="helix" evidence="7">
    <location>
        <begin position="62"/>
        <end position="86"/>
    </location>
</feature>
<reference key="1">
    <citation type="journal article" date="2005" name="Science">
        <title>The transcriptional landscape of the mammalian genome.</title>
        <authorList>
            <person name="Carninci P."/>
            <person name="Kasukawa T."/>
            <person name="Katayama S."/>
            <person name="Gough J."/>
            <person name="Frith M.C."/>
            <person name="Maeda N."/>
            <person name="Oyama R."/>
            <person name="Ravasi T."/>
            <person name="Lenhard B."/>
            <person name="Wells C."/>
            <person name="Kodzius R."/>
            <person name="Shimokawa K."/>
            <person name="Bajic V.B."/>
            <person name="Brenner S.E."/>
            <person name="Batalov S."/>
            <person name="Forrest A.R."/>
            <person name="Zavolan M."/>
            <person name="Davis M.J."/>
            <person name="Wilming L.G."/>
            <person name="Aidinis V."/>
            <person name="Allen J.E."/>
            <person name="Ambesi-Impiombato A."/>
            <person name="Apweiler R."/>
            <person name="Aturaliya R.N."/>
            <person name="Bailey T.L."/>
            <person name="Bansal M."/>
            <person name="Baxter L."/>
            <person name="Beisel K.W."/>
            <person name="Bersano T."/>
            <person name="Bono H."/>
            <person name="Chalk A.M."/>
            <person name="Chiu K.P."/>
            <person name="Choudhary V."/>
            <person name="Christoffels A."/>
            <person name="Clutterbuck D.R."/>
            <person name="Crowe M.L."/>
            <person name="Dalla E."/>
            <person name="Dalrymple B.P."/>
            <person name="de Bono B."/>
            <person name="Della Gatta G."/>
            <person name="di Bernardo D."/>
            <person name="Down T."/>
            <person name="Engstrom P."/>
            <person name="Fagiolini M."/>
            <person name="Faulkner G."/>
            <person name="Fletcher C.F."/>
            <person name="Fukushima T."/>
            <person name="Furuno M."/>
            <person name="Futaki S."/>
            <person name="Gariboldi M."/>
            <person name="Georgii-Hemming P."/>
            <person name="Gingeras T.R."/>
            <person name="Gojobori T."/>
            <person name="Green R.E."/>
            <person name="Gustincich S."/>
            <person name="Harbers M."/>
            <person name="Hayashi Y."/>
            <person name="Hensch T.K."/>
            <person name="Hirokawa N."/>
            <person name="Hill D."/>
            <person name="Huminiecki L."/>
            <person name="Iacono M."/>
            <person name="Ikeo K."/>
            <person name="Iwama A."/>
            <person name="Ishikawa T."/>
            <person name="Jakt M."/>
            <person name="Kanapin A."/>
            <person name="Katoh M."/>
            <person name="Kawasawa Y."/>
            <person name="Kelso J."/>
            <person name="Kitamura H."/>
            <person name="Kitano H."/>
            <person name="Kollias G."/>
            <person name="Krishnan S.P."/>
            <person name="Kruger A."/>
            <person name="Kummerfeld S.K."/>
            <person name="Kurochkin I.V."/>
            <person name="Lareau L.F."/>
            <person name="Lazarevic D."/>
            <person name="Lipovich L."/>
            <person name="Liu J."/>
            <person name="Liuni S."/>
            <person name="McWilliam S."/>
            <person name="Madan Babu M."/>
            <person name="Madera M."/>
            <person name="Marchionni L."/>
            <person name="Matsuda H."/>
            <person name="Matsuzawa S."/>
            <person name="Miki H."/>
            <person name="Mignone F."/>
            <person name="Miyake S."/>
            <person name="Morris K."/>
            <person name="Mottagui-Tabar S."/>
            <person name="Mulder N."/>
            <person name="Nakano N."/>
            <person name="Nakauchi H."/>
            <person name="Ng P."/>
            <person name="Nilsson R."/>
            <person name="Nishiguchi S."/>
            <person name="Nishikawa S."/>
            <person name="Nori F."/>
            <person name="Ohara O."/>
            <person name="Okazaki Y."/>
            <person name="Orlando V."/>
            <person name="Pang K.C."/>
            <person name="Pavan W.J."/>
            <person name="Pavesi G."/>
            <person name="Pesole G."/>
            <person name="Petrovsky N."/>
            <person name="Piazza S."/>
            <person name="Reed J."/>
            <person name="Reid J.F."/>
            <person name="Ring B.Z."/>
            <person name="Ringwald M."/>
            <person name="Rost B."/>
            <person name="Ruan Y."/>
            <person name="Salzberg S.L."/>
            <person name="Sandelin A."/>
            <person name="Schneider C."/>
            <person name="Schoenbach C."/>
            <person name="Sekiguchi K."/>
            <person name="Semple C.A."/>
            <person name="Seno S."/>
            <person name="Sessa L."/>
            <person name="Sheng Y."/>
            <person name="Shibata Y."/>
            <person name="Shimada H."/>
            <person name="Shimada K."/>
            <person name="Silva D."/>
            <person name="Sinclair B."/>
            <person name="Sperling S."/>
            <person name="Stupka E."/>
            <person name="Sugiura K."/>
            <person name="Sultana R."/>
            <person name="Takenaka Y."/>
            <person name="Taki K."/>
            <person name="Tammoja K."/>
            <person name="Tan S.L."/>
            <person name="Tang S."/>
            <person name="Taylor M.S."/>
            <person name="Tegner J."/>
            <person name="Teichmann S.A."/>
            <person name="Ueda H.R."/>
            <person name="van Nimwegen E."/>
            <person name="Verardo R."/>
            <person name="Wei C.L."/>
            <person name="Yagi K."/>
            <person name="Yamanishi H."/>
            <person name="Zabarovsky E."/>
            <person name="Zhu S."/>
            <person name="Zimmer A."/>
            <person name="Hide W."/>
            <person name="Bult C."/>
            <person name="Grimmond S.M."/>
            <person name="Teasdale R.D."/>
            <person name="Liu E.T."/>
            <person name="Brusic V."/>
            <person name="Quackenbush J."/>
            <person name="Wahlestedt C."/>
            <person name="Mattick J.S."/>
            <person name="Hume D.A."/>
            <person name="Kai C."/>
            <person name="Sasaki D."/>
            <person name="Tomaru Y."/>
            <person name="Fukuda S."/>
            <person name="Kanamori-Katayama M."/>
            <person name="Suzuki M."/>
            <person name="Aoki J."/>
            <person name="Arakawa T."/>
            <person name="Iida J."/>
            <person name="Imamura K."/>
            <person name="Itoh M."/>
            <person name="Kato T."/>
            <person name="Kawaji H."/>
            <person name="Kawagashira N."/>
            <person name="Kawashima T."/>
            <person name="Kojima M."/>
            <person name="Kondo S."/>
            <person name="Konno H."/>
            <person name="Nakano K."/>
            <person name="Ninomiya N."/>
            <person name="Nishio T."/>
            <person name="Okada M."/>
            <person name="Plessy C."/>
            <person name="Shibata K."/>
            <person name="Shiraki T."/>
            <person name="Suzuki S."/>
            <person name="Tagami M."/>
            <person name="Waki K."/>
            <person name="Watahiki A."/>
            <person name="Okamura-Oho Y."/>
            <person name="Suzuki H."/>
            <person name="Kawai J."/>
            <person name="Hayashizaki Y."/>
        </authorList>
    </citation>
    <scope>NUCLEOTIDE SEQUENCE [LARGE SCALE MRNA]</scope>
    <source>
        <strain>C57BL/6J</strain>
        <tissue>Placenta</tissue>
        <tissue>Testis</tissue>
    </source>
</reference>
<reference key="2">
    <citation type="journal article" date="2004" name="Genome Res.">
        <title>The status, quality, and expansion of the NIH full-length cDNA project: the Mammalian Gene Collection (MGC).</title>
        <authorList>
            <consortium name="The MGC Project Team"/>
        </authorList>
    </citation>
    <scope>NUCLEOTIDE SEQUENCE [LARGE SCALE MRNA]</scope>
    <source>
        <strain>Czech II</strain>
        <strain>FVB/N</strain>
        <tissue>Mammary tumor</tissue>
    </source>
</reference>
<reference key="3">
    <citation type="journal article" date="2010" name="Cell">
        <title>A tissue-specific atlas of mouse protein phosphorylation and expression.</title>
        <authorList>
            <person name="Huttlin E.L."/>
            <person name="Jedrychowski M.P."/>
            <person name="Elias J.E."/>
            <person name="Goswami T."/>
            <person name="Rad R."/>
            <person name="Beausoleil S.A."/>
            <person name="Villen J."/>
            <person name="Haas W."/>
            <person name="Sowa M.E."/>
            <person name="Gygi S.P."/>
        </authorList>
    </citation>
    <scope>IDENTIFICATION BY MASS SPECTROMETRY [LARGE SCALE ANALYSIS]</scope>
    <source>
        <tissue>Brain</tissue>
        <tissue>Lung</tissue>
        <tissue>Testis</tissue>
    </source>
</reference>
<reference key="4">
    <citation type="journal article" date="2022" name="Sci. Transl. Med.">
        <title>Loss-of-function mutations in the co-chaperone protein BAG5 cause dilated cardiomyopathy requiring heart transplantation.</title>
        <authorList>
            <person name="Hakui H."/>
            <person name="Kioka H."/>
            <person name="Miyashita Y."/>
            <person name="Nishimura S."/>
            <person name="Matsuoka K."/>
            <person name="Kato H."/>
            <person name="Tsukamoto O."/>
            <person name="Kuramoto Y."/>
            <person name="Takuwa A."/>
            <person name="Takahashi Y."/>
            <person name="Saito S."/>
            <person name="Ohta K."/>
            <person name="Asanuma H."/>
            <person name="Fu H.Y."/>
            <person name="Shinomiya H."/>
            <person name="Yamada N."/>
            <person name="Ohtani T."/>
            <person name="Sawa Y."/>
            <person name="Kitakaze M."/>
            <person name="Takashima S."/>
            <person name="Sakata Y."/>
            <person name="Asano Y."/>
        </authorList>
    </citation>
    <scope>FUNCTION</scope>
    <scope>INTERACTION WITH HSPA8</scope>
    <scope>SUBCELLULAR LOCATION</scope>
    <scope>MUTAGENESIS OF 197-ARG--TYR-447</scope>
</reference>
<reference key="5">
    <citation type="journal article" date="2010" name="Structure">
        <title>The C-terminal BAG domain of BAG5 induces conformational changes of the Hsp70 nucleotide-binding domain for ADP-ATP exchange.</title>
        <authorList>
            <person name="Arakawa A."/>
            <person name="Handa N."/>
            <person name="Ohsawa N."/>
            <person name="Shida M."/>
            <person name="Kigawa T."/>
            <person name="Hayashi F."/>
            <person name="Shirouzu M."/>
            <person name="Yokoyama S."/>
        </authorList>
    </citation>
    <scope>STRUCTURE BY NMR OF 1-86</scope>
</reference>
<comment type="function">
    <text evidence="2 3 5">Co-chaperone for HSP/HSP70 proteins. It functions as a nucleotide-exchange factor promoting the release of ADP from HSP70, thereby activating HSP70-mediated protein refolding (By similarity). Has an essential role in maintaining proteostasis at junctional membrane complexes (JMC), where it may function as a scaffold between the HSPA8 chaperone and JMC proteins enabling correct, HSPA8-dependent JMC protein folding (PubMed:35044787). Inhibits both auto-ubiquitination of PRKN and ubiquitination of target proteins by PRKN (By similarity).</text>
</comment>
<comment type="subunit">
    <text evidence="1 3 5">Binds to the ATPase domain of HSP/HSP70 chaperones. Binds PRKN (By similarity). Interacts with HSPA8 (PubMed:35044787). Interacts with JPH2 (By similarity).</text>
</comment>
<comment type="subcellular location">
    <text evidence="5">In cardiomyocytes, localized at specialized membrane contact sites between T-tubules and the sarcoplasmic reticulum, known as junctional membrane complexes.</text>
</comment>
<comment type="domain">
    <text evidence="1">The fifth BAG domain is responsible for the interaction with HSP70 nucleotide-binding domain.</text>
</comment>
<comment type="sequence caution" evidence="6">
    <conflict type="erroneous initiation">
        <sequence resource="EMBL-CDS" id="AAH27827"/>
    </conflict>
</comment>
<comment type="sequence caution" evidence="6">
    <conflict type="frameshift">
        <sequence resource="EMBL-CDS" id="BAB24105"/>
    </conflict>
</comment>
<evidence type="ECO:0000250" key="1"/>
<evidence type="ECO:0000250" key="2">
    <source>
        <dbReference type="UniProtKB" id="Q5QJC9"/>
    </source>
</evidence>
<evidence type="ECO:0000250" key="3">
    <source>
        <dbReference type="UniProtKB" id="Q9UL15"/>
    </source>
</evidence>
<evidence type="ECO:0000255" key="4">
    <source>
        <dbReference type="PROSITE-ProRule" id="PRU00369"/>
    </source>
</evidence>
<evidence type="ECO:0000269" key="5">
    <source>
    </source>
</evidence>
<evidence type="ECO:0000305" key="6"/>
<evidence type="ECO:0007829" key="7">
    <source>
        <dbReference type="PDB" id="1UGO"/>
    </source>
</evidence>
<proteinExistence type="evidence at protein level"/>
<keyword id="KW-0002">3D-structure</keyword>
<keyword id="KW-0143">Chaperone</keyword>
<keyword id="KW-1185">Reference proteome</keyword>
<keyword id="KW-0677">Repeat</keyword>
<protein>
    <recommendedName>
        <fullName>BAG family molecular chaperone regulator 5</fullName>
        <shortName>BAG-5</shortName>
    </recommendedName>
    <alternativeName>
        <fullName>Bcl-2-associated athanogene 5</fullName>
    </alternativeName>
</protein>